<feature type="chain" id="PRO_0000102310" description="Lipoyl synthase">
    <location>
        <begin position="1"/>
        <end position="348"/>
    </location>
</feature>
<feature type="domain" description="Radical SAM core" evidence="2">
    <location>
        <begin position="67"/>
        <end position="281"/>
    </location>
</feature>
<feature type="binding site" evidence="1">
    <location>
        <position position="55"/>
    </location>
    <ligand>
        <name>[4Fe-4S] cluster</name>
        <dbReference type="ChEBI" id="CHEBI:49883"/>
        <label>1</label>
    </ligand>
</feature>
<feature type="binding site" evidence="1">
    <location>
        <position position="60"/>
    </location>
    <ligand>
        <name>[4Fe-4S] cluster</name>
        <dbReference type="ChEBI" id="CHEBI:49883"/>
        <label>1</label>
    </ligand>
</feature>
<feature type="binding site" evidence="1">
    <location>
        <position position="66"/>
    </location>
    <ligand>
        <name>[4Fe-4S] cluster</name>
        <dbReference type="ChEBI" id="CHEBI:49883"/>
        <label>1</label>
    </ligand>
</feature>
<feature type="binding site" evidence="1">
    <location>
        <position position="81"/>
    </location>
    <ligand>
        <name>[4Fe-4S] cluster</name>
        <dbReference type="ChEBI" id="CHEBI:49883"/>
        <label>2</label>
        <note>4Fe-4S-S-AdoMet</note>
    </ligand>
</feature>
<feature type="binding site" evidence="1">
    <location>
        <position position="85"/>
    </location>
    <ligand>
        <name>[4Fe-4S] cluster</name>
        <dbReference type="ChEBI" id="CHEBI:49883"/>
        <label>2</label>
        <note>4Fe-4S-S-AdoMet</note>
    </ligand>
</feature>
<feature type="binding site" evidence="1">
    <location>
        <position position="88"/>
    </location>
    <ligand>
        <name>[4Fe-4S] cluster</name>
        <dbReference type="ChEBI" id="CHEBI:49883"/>
        <label>2</label>
        <note>4Fe-4S-S-AdoMet</note>
    </ligand>
</feature>
<feature type="binding site" evidence="1">
    <location>
        <position position="292"/>
    </location>
    <ligand>
        <name>[4Fe-4S] cluster</name>
        <dbReference type="ChEBI" id="CHEBI:49883"/>
        <label>1</label>
    </ligand>
</feature>
<dbReference type="EC" id="2.8.1.8" evidence="1"/>
<dbReference type="EMBL" id="BA000036">
    <property type="protein sequence ID" value="BAB99602.1"/>
    <property type="molecule type" value="Genomic_DNA"/>
</dbReference>
<dbReference type="EMBL" id="BX927154">
    <property type="protein sequence ID" value="CAF20549.1"/>
    <property type="molecule type" value="Genomic_DNA"/>
</dbReference>
<dbReference type="RefSeq" id="NP_601412.1">
    <property type="nucleotide sequence ID" value="NC_003450.3"/>
</dbReference>
<dbReference type="RefSeq" id="WP_003856634.1">
    <property type="nucleotide sequence ID" value="NC_006958.1"/>
</dbReference>
<dbReference type="SMR" id="Q8NNJ0"/>
<dbReference type="STRING" id="196627.cg2423"/>
<dbReference type="GeneID" id="1020160"/>
<dbReference type="KEGG" id="cgb:cg2423"/>
<dbReference type="KEGG" id="cgl:Cgl2209"/>
<dbReference type="PATRIC" id="fig|196627.13.peg.2144"/>
<dbReference type="eggNOG" id="COG0320">
    <property type="taxonomic scope" value="Bacteria"/>
</dbReference>
<dbReference type="HOGENOM" id="CLU_033144_2_1_11"/>
<dbReference type="OrthoDB" id="9787898at2"/>
<dbReference type="BioCyc" id="CORYNE:G18NG-11801-MONOMER"/>
<dbReference type="UniPathway" id="UPA00538">
    <property type="reaction ID" value="UER00593"/>
</dbReference>
<dbReference type="Proteomes" id="UP000000582">
    <property type="component" value="Chromosome"/>
</dbReference>
<dbReference type="Proteomes" id="UP000001009">
    <property type="component" value="Chromosome"/>
</dbReference>
<dbReference type="GO" id="GO:0005737">
    <property type="term" value="C:cytoplasm"/>
    <property type="evidence" value="ECO:0007669"/>
    <property type="project" value="UniProtKB-SubCell"/>
</dbReference>
<dbReference type="GO" id="GO:0051539">
    <property type="term" value="F:4 iron, 4 sulfur cluster binding"/>
    <property type="evidence" value="ECO:0007669"/>
    <property type="project" value="UniProtKB-UniRule"/>
</dbReference>
<dbReference type="GO" id="GO:0016992">
    <property type="term" value="F:lipoate synthase activity"/>
    <property type="evidence" value="ECO:0007669"/>
    <property type="project" value="UniProtKB-UniRule"/>
</dbReference>
<dbReference type="GO" id="GO:0046872">
    <property type="term" value="F:metal ion binding"/>
    <property type="evidence" value="ECO:0007669"/>
    <property type="project" value="UniProtKB-KW"/>
</dbReference>
<dbReference type="CDD" id="cd01335">
    <property type="entry name" value="Radical_SAM"/>
    <property type="match status" value="1"/>
</dbReference>
<dbReference type="Gene3D" id="3.20.20.70">
    <property type="entry name" value="Aldolase class I"/>
    <property type="match status" value="1"/>
</dbReference>
<dbReference type="HAMAP" id="MF_00206">
    <property type="entry name" value="Lipoyl_synth"/>
    <property type="match status" value="1"/>
</dbReference>
<dbReference type="InterPro" id="IPR013785">
    <property type="entry name" value="Aldolase_TIM"/>
</dbReference>
<dbReference type="InterPro" id="IPR006638">
    <property type="entry name" value="Elp3/MiaA/NifB-like_rSAM"/>
</dbReference>
<dbReference type="InterPro" id="IPR003698">
    <property type="entry name" value="Lipoyl_synth"/>
</dbReference>
<dbReference type="InterPro" id="IPR007197">
    <property type="entry name" value="rSAM"/>
</dbReference>
<dbReference type="NCBIfam" id="TIGR00510">
    <property type="entry name" value="lipA"/>
    <property type="match status" value="1"/>
</dbReference>
<dbReference type="NCBIfam" id="NF004019">
    <property type="entry name" value="PRK05481.1"/>
    <property type="match status" value="1"/>
</dbReference>
<dbReference type="NCBIfam" id="NF009544">
    <property type="entry name" value="PRK12928.1"/>
    <property type="match status" value="1"/>
</dbReference>
<dbReference type="PANTHER" id="PTHR10949">
    <property type="entry name" value="LIPOYL SYNTHASE"/>
    <property type="match status" value="1"/>
</dbReference>
<dbReference type="PANTHER" id="PTHR10949:SF0">
    <property type="entry name" value="LIPOYL SYNTHASE, MITOCHONDRIAL"/>
    <property type="match status" value="1"/>
</dbReference>
<dbReference type="Pfam" id="PF04055">
    <property type="entry name" value="Radical_SAM"/>
    <property type="match status" value="1"/>
</dbReference>
<dbReference type="PIRSF" id="PIRSF005963">
    <property type="entry name" value="Lipoyl_synth"/>
    <property type="match status" value="1"/>
</dbReference>
<dbReference type="SFLD" id="SFLDF00271">
    <property type="entry name" value="lipoyl_synthase"/>
    <property type="match status" value="1"/>
</dbReference>
<dbReference type="SFLD" id="SFLDS00029">
    <property type="entry name" value="Radical_SAM"/>
    <property type="match status" value="1"/>
</dbReference>
<dbReference type="SMART" id="SM00729">
    <property type="entry name" value="Elp3"/>
    <property type="match status" value="1"/>
</dbReference>
<dbReference type="SUPFAM" id="SSF102114">
    <property type="entry name" value="Radical SAM enzymes"/>
    <property type="match status" value="1"/>
</dbReference>
<dbReference type="PROSITE" id="PS51918">
    <property type="entry name" value="RADICAL_SAM"/>
    <property type="match status" value="1"/>
</dbReference>
<organism>
    <name type="scientific">Corynebacterium glutamicum (strain ATCC 13032 / DSM 20300 / JCM 1318 / BCRC 11384 / CCUG 27702 / LMG 3730 / NBRC 12168 / NCIMB 10025 / NRRL B-2784 / 534)</name>
    <dbReference type="NCBI Taxonomy" id="196627"/>
    <lineage>
        <taxon>Bacteria</taxon>
        <taxon>Bacillati</taxon>
        <taxon>Actinomycetota</taxon>
        <taxon>Actinomycetes</taxon>
        <taxon>Mycobacteriales</taxon>
        <taxon>Corynebacteriaceae</taxon>
        <taxon>Corynebacterium</taxon>
    </lineage>
</organism>
<comment type="function">
    <text evidence="1">Catalyzes the radical-mediated insertion of two sulfur atoms into the C-6 and C-8 positions of the octanoyl moiety bound to the lipoyl domains of lipoate-dependent enzymes, thereby converting the octanoylated domains into lipoylated derivatives.</text>
</comment>
<comment type="catalytic activity">
    <reaction evidence="1">
        <text>[[Fe-S] cluster scaffold protein carrying a second [4Fe-4S](2+) cluster] + N(6)-octanoyl-L-lysyl-[protein] + 2 oxidized [2Fe-2S]-[ferredoxin] + 2 S-adenosyl-L-methionine + 4 H(+) = [[Fe-S] cluster scaffold protein] + N(6)-[(R)-dihydrolipoyl]-L-lysyl-[protein] + 4 Fe(3+) + 2 hydrogen sulfide + 2 5'-deoxyadenosine + 2 L-methionine + 2 reduced [2Fe-2S]-[ferredoxin]</text>
        <dbReference type="Rhea" id="RHEA:16585"/>
        <dbReference type="Rhea" id="RHEA-COMP:9928"/>
        <dbReference type="Rhea" id="RHEA-COMP:10000"/>
        <dbReference type="Rhea" id="RHEA-COMP:10001"/>
        <dbReference type="Rhea" id="RHEA-COMP:10475"/>
        <dbReference type="Rhea" id="RHEA-COMP:14568"/>
        <dbReference type="Rhea" id="RHEA-COMP:14569"/>
        <dbReference type="ChEBI" id="CHEBI:15378"/>
        <dbReference type="ChEBI" id="CHEBI:17319"/>
        <dbReference type="ChEBI" id="CHEBI:29034"/>
        <dbReference type="ChEBI" id="CHEBI:29919"/>
        <dbReference type="ChEBI" id="CHEBI:33722"/>
        <dbReference type="ChEBI" id="CHEBI:33737"/>
        <dbReference type="ChEBI" id="CHEBI:33738"/>
        <dbReference type="ChEBI" id="CHEBI:57844"/>
        <dbReference type="ChEBI" id="CHEBI:59789"/>
        <dbReference type="ChEBI" id="CHEBI:78809"/>
        <dbReference type="ChEBI" id="CHEBI:83100"/>
        <dbReference type="EC" id="2.8.1.8"/>
    </reaction>
</comment>
<comment type="cofactor">
    <cofactor evidence="1">
        <name>[4Fe-4S] cluster</name>
        <dbReference type="ChEBI" id="CHEBI:49883"/>
    </cofactor>
    <text evidence="1">Binds 2 [4Fe-4S] clusters per subunit. One cluster is coordinated with 3 cysteines and an exchangeable S-adenosyl-L-methionine.</text>
</comment>
<comment type="pathway">
    <text evidence="1">Protein modification; protein lipoylation via endogenous pathway; protein N(6)-(lipoyl)lysine from octanoyl-[acyl-carrier-protein]: step 2/2.</text>
</comment>
<comment type="subcellular location">
    <subcellularLocation>
        <location evidence="1">Cytoplasm</location>
    </subcellularLocation>
</comment>
<comment type="similarity">
    <text evidence="1">Belongs to the radical SAM superfamily. Lipoyl synthase family.</text>
</comment>
<accession>Q8NNJ0</accession>
<sequence>MTIAPEGRRLLRVEARNSETPIETKPRWIRNQVKNGPEYQDMKERVAGASLHTVCQEAGCPNIHECWESREATFLIGGANCSRRCDFCMINSARPEPLDRGEPLRVAESVREMQLNYSTITGVTRDDLDDEGAWLYSEVVRKIHELNPHTGVENLVPDFSGKKDLLQEVFESRPEVFAHNVETVPRIFKRIRPAFRYERSLDVIRQARDFGLVTKSNLILGMGETKEEITEALQDLHDAGCDIITITQYLRPGPLFHPIERWVKPEEFLEHADAAKEMGFAAVMSGPLVRSSYRAGRLYAQAMEFRGEEIPAHLAHLKDTSGGSTAQEASTLLERYGASEDTPVVSFN</sequence>
<keyword id="KW-0004">4Fe-4S</keyword>
<keyword id="KW-0963">Cytoplasm</keyword>
<keyword id="KW-0408">Iron</keyword>
<keyword id="KW-0411">Iron-sulfur</keyword>
<keyword id="KW-0479">Metal-binding</keyword>
<keyword id="KW-1185">Reference proteome</keyword>
<keyword id="KW-0949">S-adenosyl-L-methionine</keyword>
<keyword id="KW-0808">Transferase</keyword>
<reference key="1">
    <citation type="journal article" date="2003" name="Appl. Microbiol. Biotechnol.">
        <title>The Corynebacterium glutamicum genome: features and impacts on biotechnological processes.</title>
        <authorList>
            <person name="Ikeda M."/>
            <person name="Nakagawa S."/>
        </authorList>
    </citation>
    <scope>NUCLEOTIDE SEQUENCE [LARGE SCALE GENOMIC DNA]</scope>
    <source>
        <strain>ATCC 13032 / DSM 20300 / JCM 1318 / BCRC 11384 / CCUG 27702 / LMG 3730 / NBRC 12168 / NCIMB 10025 / NRRL B-2784 / 534</strain>
    </source>
</reference>
<reference key="2">
    <citation type="journal article" date="2003" name="J. Biotechnol.">
        <title>The complete Corynebacterium glutamicum ATCC 13032 genome sequence and its impact on the production of L-aspartate-derived amino acids and vitamins.</title>
        <authorList>
            <person name="Kalinowski J."/>
            <person name="Bathe B."/>
            <person name="Bartels D."/>
            <person name="Bischoff N."/>
            <person name="Bott M."/>
            <person name="Burkovski A."/>
            <person name="Dusch N."/>
            <person name="Eggeling L."/>
            <person name="Eikmanns B.J."/>
            <person name="Gaigalat L."/>
            <person name="Goesmann A."/>
            <person name="Hartmann M."/>
            <person name="Huthmacher K."/>
            <person name="Kraemer R."/>
            <person name="Linke B."/>
            <person name="McHardy A.C."/>
            <person name="Meyer F."/>
            <person name="Moeckel B."/>
            <person name="Pfefferle W."/>
            <person name="Puehler A."/>
            <person name="Rey D.A."/>
            <person name="Rueckert C."/>
            <person name="Rupp O."/>
            <person name="Sahm H."/>
            <person name="Wendisch V.F."/>
            <person name="Wiegraebe I."/>
            <person name="Tauch A."/>
        </authorList>
    </citation>
    <scope>NUCLEOTIDE SEQUENCE [LARGE SCALE GENOMIC DNA]</scope>
    <source>
        <strain>ATCC 13032 / DSM 20300 / JCM 1318 / BCRC 11384 / CCUG 27702 / LMG 3730 / NBRC 12168 / NCIMB 10025 / NRRL B-2784 / 534</strain>
    </source>
</reference>
<protein>
    <recommendedName>
        <fullName evidence="1">Lipoyl synthase</fullName>
        <ecNumber evidence="1">2.8.1.8</ecNumber>
    </recommendedName>
    <alternativeName>
        <fullName evidence="1">Lip-syn</fullName>
        <shortName evidence="1">LS</shortName>
    </alternativeName>
    <alternativeName>
        <fullName evidence="1">Lipoate synthase</fullName>
    </alternativeName>
    <alternativeName>
        <fullName evidence="1">Lipoic acid synthase</fullName>
    </alternativeName>
    <alternativeName>
        <fullName evidence="1">Sulfur insertion protein LipA</fullName>
    </alternativeName>
</protein>
<name>LIPA_CORGL</name>
<proteinExistence type="inferred from homology"/>
<gene>
    <name evidence="1" type="primary">lipA</name>
    <name type="ordered locus">Cgl2209</name>
    <name type="ordered locus">cg2423</name>
</gene>
<evidence type="ECO:0000255" key="1">
    <source>
        <dbReference type="HAMAP-Rule" id="MF_00206"/>
    </source>
</evidence>
<evidence type="ECO:0000255" key="2">
    <source>
        <dbReference type="PROSITE-ProRule" id="PRU01266"/>
    </source>
</evidence>